<keyword id="KW-0378">Hydrolase</keyword>
<keyword id="KW-0460">Magnesium</keyword>
<keyword id="KW-0479">Metal-binding</keyword>
<proteinExistence type="inferred from homology"/>
<organism>
    <name type="scientific">Yersinia pseudotuberculosis serotype I (strain IP32953)</name>
    <dbReference type="NCBI Taxonomy" id="273123"/>
    <lineage>
        <taxon>Bacteria</taxon>
        <taxon>Pseudomonadati</taxon>
        <taxon>Pseudomonadota</taxon>
        <taxon>Gammaproteobacteria</taxon>
        <taxon>Enterobacterales</taxon>
        <taxon>Yersiniaceae</taxon>
        <taxon>Yersinia</taxon>
    </lineage>
</organism>
<gene>
    <name evidence="1" type="primary">cof</name>
    <name type="ordered locus">YPTB0968</name>
</gene>
<sequence length="273" mass="30540">MYRLAAFDMDGTLLMRDHKIGSITLNALHQLADAGVTLTFATGRHYLDMKGILSHSGLNGYLITGNGTRVCDAEGNPLYGMDLPAELVEFVLRTPWQTNASIHLFRDDGWFTDRNDPDLLIAHTTSGFHFQLTEWDELPLTGNHKFCFIVSHQELVELKAQLEQQMSGEADFCFSATDCLEVLPRGCNKGVALEKLSHHLDLTLADCMAFGDAMNDKEMLSRVGRGLVMGNALPQLKQELPQLQIIGRCEQQGVAHYLHHWLSSPHLTYSPEF</sequence>
<dbReference type="EC" id="3.6.1.-" evidence="1"/>
<dbReference type="EMBL" id="BX936398">
    <property type="protein sequence ID" value="CAH20208.1"/>
    <property type="molecule type" value="Genomic_DNA"/>
</dbReference>
<dbReference type="RefSeq" id="WP_011191868.1">
    <property type="nucleotide sequence ID" value="NC_006155.1"/>
</dbReference>
<dbReference type="SMR" id="Q66DS5"/>
<dbReference type="KEGG" id="ypo:BZ17_1579"/>
<dbReference type="KEGG" id="yps:YPTB0968"/>
<dbReference type="PATRIC" id="fig|273123.14.peg.1676"/>
<dbReference type="Proteomes" id="UP000001011">
    <property type="component" value="Chromosome"/>
</dbReference>
<dbReference type="GO" id="GO:0002145">
    <property type="term" value="F:4-amino-5-hydroxymethyl-2-methylpyrimidine diphosphatase activity"/>
    <property type="evidence" value="ECO:0007669"/>
    <property type="project" value="RHEA"/>
</dbReference>
<dbReference type="GO" id="GO:0000287">
    <property type="term" value="F:magnesium ion binding"/>
    <property type="evidence" value="ECO:0000250"/>
    <property type="project" value="UniProtKB"/>
</dbReference>
<dbReference type="GO" id="GO:0016791">
    <property type="term" value="F:phosphatase activity"/>
    <property type="evidence" value="ECO:0000250"/>
    <property type="project" value="UniProtKB"/>
</dbReference>
<dbReference type="CDD" id="cd07516">
    <property type="entry name" value="HAD_Pase"/>
    <property type="match status" value="1"/>
</dbReference>
<dbReference type="FunFam" id="3.30.1240.10:FF:000018">
    <property type="entry name" value="HMP-PP phosphatase"/>
    <property type="match status" value="1"/>
</dbReference>
<dbReference type="Gene3D" id="3.30.1240.10">
    <property type="match status" value="1"/>
</dbReference>
<dbReference type="Gene3D" id="3.40.50.1000">
    <property type="entry name" value="HAD superfamily/HAD-like"/>
    <property type="match status" value="1"/>
</dbReference>
<dbReference type="HAMAP" id="MF_01847">
    <property type="entry name" value="HMP_PP_phosphat"/>
    <property type="match status" value="1"/>
</dbReference>
<dbReference type="InterPro" id="IPR000150">
    <property type="entry name" value="Cof"/>
</dbReference>
<dbReference type="InterPro" id="IPR036412">
    <property type="entry name" value="HAD-like_sf"/>
</dbReference>
<dbReference type="InterPro" id="IPR006379">
    <property type="entry name" value="HAD-SF_hydro_IIB"/>
</dbReference>
<dbReference type="InterPro" id="IPR023214">
    <property type="entry name" value="HAD_sf"/>
</dbReference>
<dbReference type="InterPro" id="IPR023938">
    <property type="entry name" value="HMP-PP_phosphatase"/>
</dbReference>
<dbReference type="NCBIfam" id="TIGR00099">
    <property type="entry name" value="Cof-subfamily"/>
    <property type="match status" value="1"/>
</dbReference>
<dbReference type="NCBIfam" id="TIGR01484">
    <property type="entry name" value="HAD-SF-IIB"/>
    <property type="match status" value="1"/>
</dbReference>
<dbReference type="NCBIfam" id="NF011705">
    <property type="entry name" value="PRK15126.1"/>
    <property type="match status" value="1"/>
</dbReference>
<dbReference type="PANTHER" id="PTHR47267">
    <property type="match status" value="1"/>
</dbReference>
<dbReference type="PANTHER" id="PTHR47267:SF2">
    <property type="entry name" value="HMP-PP PHOSPHATASE"/>
    <property type="match status" value="1"/>
</dbReference>
<dbReference type="Pfam" id="PF08282">
    <property type="entry name" value="Hydrolase_3"/>
    <property type="match status" value="1"/>
</dbReference>
<dbReference type="SFLD" id="SFLDG01140">
    <property type="entry name" value="C2.B:_Phosphomannomutase_and_P"/>
    <property type="match status" value="1"/>
</dbReference>
<dbReference type="SFLD" id="SFLDS00003">
    <property type="entry name" value="Haloacid_Dehalogenase"/>
    <property type="match status" value="1"/>
</dbReference>
<dbReference type="SUPFAM" id="SSF56784">
    <property type="entry name" value="HAD-like"/>
    <property type="match status" value="1"/>
</dbReference>
<dbReference type="PROSITE" id="PS01228">
    <property type="entry name" value="COF_1"/>
    <property type="match status" value="1"/>
</dbReference>
<dbReference type="PROSITE" id="PS01229">
    <property type="entry name" value="COF_2"/>
    <property type="match status" value="1"/>
</dbReference>
<comment type="function">
    <text evidence="1">Catalyzes the hydrolysis of 4-amino-2-methyl-5-hydroxymethylpyrimidine pyrophosphate (HMP-PP) to 4-amino-2-methyl-5-hydroxymethylpyrimidine phosphate (HMP-P).</text>
</comment>
<comment type="catalytic activity">
    <reaction evidence="1">
        <text>4-amino-2-methyl-5-(diphosphooxymethyl)pyrimidine + H2O = 4-amino-2-methyl-5-(phosphooxymethyl)pyrimidine + phosphate + H(+)</text>
        <dbReference type="Rhea" id="RHEA:27914"/>
        <dbReference type="ChEBI" id="CHEBI:15377"/>
        <dbReference type="ChEBI" id="CHEBI:15378"/>
        <dbReference type="ChEBI" id="CHEBI:43474"/>
        <dbReference type="ChEBI" id="CHEBI:57841"/>
        <dbReference type="ChEBI" id="CHEBI:58354"/>
    </reaction>
</comment>
<comment type="cofactor">
    <cofactor evidence="1">
        <name>Mg(2+)</name>
        <dbReference type="ChEBI" id="CHEBI:18420"/>
    </cofactor>
</comment>
<comment type="similarity">
    <text evidence="1">Belongs to the HAD-like hydrolase superfamily. Cof family.</text>
</comment>
<reference key="1">
    <citation type="journal article" date="2004" name="Proc. Natl. Acad. Sci. U.S.A.">
        <title>Insights into the evolution of Yersinia pestis through whole-genome comparison with Yersinia pseudotuberculosis.</title>
        <authorList>
            <person name="Chain P.S.G."/>
            <person name="Carniel E."/>
            <person name="Larimer F.W."/>
            <person name="Lamerdin J."/>
            <person name="Stoutland P.O."/>
            <person name="Regala W.M."/>
            <person name="Georgescu A.M."/>
            <person name="Vergez L.M."/>
            <person name="Land M.L."/>
            <person name="Motin V.L."/>
            <person name="Brubaker R.R."/>
            <person name="Fowler J."/>
            <person name="Hinnebusch J."/>
            <person name="Marceau M."/>
            <person name="Medigue C."/>
            <person name="Simonet M."/>
            <person name="Chenal-Francisque V."/>
            <person name="Souza B."/>
            <person name="Dacheux D."/>
            <person name="Elliott J.M."/>
            <person name="Derbise A."/>
            <person name="Hauser L.J."/>
            <person name="Garcia E."/>
        </authorList>
    </citation>
    <scope>NUCLEOTIDE SEQUENCE [LARGE SCALE GENOMIC DNA]</scope>
    <source>
        <strain>IP32953</strain>
    </source>
</reference>
<evidence type="ECO:0000255" key="1">
    <source>
        <dbReference type="HAMAP-Rule" id="MF_01847"/>
    </source>
</evidence>
<feature type="chain" id="PRO_0000343005" description="HMP-PP phosphatase">
    <location>
        <begin position="1"/>
        <end position="273"/>
    </location>
</feature>
<feature type="active site" description="Nucleophile" evidence="1">
    <location>
        <position position="8"/>
    </location>
</feature>
<feature type="binding site" evidence="1">
    <location>
        <position position="8"/>
    </location>
    <ligand>
        <name>Mg(2+)</name>
        <dbReference type="ChEBI" id="CHEBI:18420"/>
    </ligand>
</feature>
<feature type="binding site" evidence="1">
    <location>
        <position position="10"/>
    </location>
    <ligand>
        <name>Mg(2+)</name>
        <dbReference type="ChEBI" id="CHEBI:18420"/>
    </ligand>
</feature>
<feature type="binding site" evidence="1">
    <location>
        <position position="212"/>
    </location>
    <ligand>
        <name>Mg(2+)</name>
        <dbReference type="ChEBI" id="CHEBI:18420"/>
    </ligand>
</feature>
<protein>
    <recommendedName>
        <fullName evidence="1">HMP-PP phosphatase</fullName>
        <ecNumber evidence="1">3.6.1.-</ecNumber>
    </recommendedName>
</protein>
<accession>Q66DS5</accession>
<name>COF_YERPS</name>